<organism>
    <name type="scientific">Bos taurus</name>
    <name type="common">Bovine</name>
    <dbReference type="NCBI Taxonomy" id="9913"/>
    <lineage>
        <taxon>Eukaryota</taxon>
        <taxon>Metazoa</taxon>
        <taxon>Chordata</taxon>
        <taxon>Craniata</taxon>
        <taxon>Vertebrata</taxon>
        <taxon>Euteleostomi</taxon>
        <taxon>Mammalia</taxon>
        <taxon>Eutheria</taxon>
        <taxon>Laurasiatheria</taxon>
        <taxon>Artiodactyla</taxon>
        <taxon>Ruminantia</taxon>
        <taxon>Pecora</taxon>
        <taxon>Bovidae</taxon>
        <taxon>Bovinae</taxon>
        <taxon>Bos</taxon>
    </lineage>
</organism>
<proteinExistence type="evidence at transcript level"/>
<accession>Q5EA79</accession>
<accession>Q3T0D4</accession>
<comment type="function">
    <text evidence="2">Mutarotase that catalyzes the interconversion of beta-D-galactose and alpha-D-galactose during galactose metabolism. Beta-D-galactose is metabolized in the liver into glucose 1-phosphate, the primary metabolic fuel, by the action of four enzymes that constitute the Leloir pathway: GALM, GALK1 (galactokinase), GALT (galactose-1-phosphate uridylyltransferase) and GALE (UDP-galactose-4'-epimerase). Involved in the maintenance of the equilibrium between the beta- and alpha-anomers of galactose, therefore ensuring a sufficient supply of the alpha-anomer for GALK1. Also active on D-glucose although shows a preference for galactose over glucose.</text>
</comment>
<comment type="catalytic activity">
    <reaction evidence="2">
        <text>alpha-D-galactose = beta-D-galactose</text>
        <dbReference type="Rhea" id="RHEA:28675"/>
        <dbReference type="ChEBI" id="CHEBI:27667"/>
        <dbReference type="ChEBI" id="CHEBI:28061"/>
        <dbReference type="EC" id="5.1.3.3"/>
    </reaction>
    <physiologicalReaction direction="right-to-left" evidence="2">
        <dbReference type="Rhea" id="RHEA:28677"/>
    </physiologicalReaction>
</comment>
<comment type="catalytic activity">
    <reaction evidence="2">
        <text>alpha-D-glucose = beta-D-glucose</text>
        <dbReference type="Rhea" id="RHEA:10264"/>
        <dbReference type="ChEBI" id="CHEBI:15903"/>
        <dbReference type="ChEBI" id="CHEBI:17925"/>
        <dbReference type="EC" id="5.1.3.3"/>
    </reaction>
</comment>
<comment type="pathway">
    <text evidence="2">Carbohydrate metabolism; hexose metabolism.</text>
</comment>
<comment type="pathway">
    <text evidence="2">Carbohydrate metabolism; galactose metabolism.</text>
</comment>
<comment type="subunit">
    <text evidence="2">Monomer.</text>
</comment>
<comment type="subcellular location">
    <subcellularLocation>
        <location evidence="3">Cytoplasm</location>
    </subcellularLocation>
</comment>
<comment type="similarity">
    <text evidence="3">Belongs to the aldose epimerase family.</text>
</comment>
<reference key="1">
    <citation type="journal article" date="2005" name="BMC Genomics">
        <title>Characterization of 954 bovine full-CDS cDNA sequences.</title>
        <authorList>
            <person name="Harhay G.P."/>
            <person name="Sonstegard T.S."/>
            <person name="Keele J.W."/>
            <person name="Heaton M.P."/>
            <person name="Clawson M.L."/>
            <person name="Snelling W.M."/>
            <person name="Wiedmann R.T."/>
            <person name="Van Tassell C.P."/>
            <person name="Smith T.P.L."/>
        </authorList>
    </citation>
    <scope>NUCLEOTIDE SEQUENCE [LARGE SCALE MRNA]</scope>
</reference>
<reference key="2">
    <citation type="submission" date="2005-08" db="EMBL/GenBank/DDBJ databases">
        <authorList>
            <consortium name="NIH - Mammalian Gene Collection (MGC) project"/>
        </authorList>
    </citation>
    <scope>NUCLEOTIDE SEQUENCE [LARGE SCALE MRNA]</scope>
    <source>
        <strain>Crossbred X Angus</strain>
        <tissue>Ileum</tissue>
    </source>
</reference>
<keyword id="KW-0119">Carbohydrate metabolism</keyword>
<keyword id="KW-0963">Cytoplasm</keyword>
<keyword id="KW-0413">Isomerase</keyword>
<keyword id="KW-0597">Phosphoprotein</keyword>
<keyword id="KW-1185">Reference proteome</keyword>
<evidence type="ECO:0000250" key="1">
    <source>
        <dbReference type="UniProtKB" id="Q66HG4"/>
    </source>
</evidence>
<evidence type="ECO:0000250" key="2">
    <source>
        <dbReference type="UniProtKB" id="Q96C23"/>
    </source>
</evidence>
<evidence type="ECO:0000305" key="3"/>
<dbReference type="EC" id="5.1.3.3" evidence="2"/>
<dbReference type="EMBL" id="BT020690">
    <property type="protein sequence ID" value="AAX08707.1"/>
    <property type="molecule type" value="mRNA"/>
</dbReference>
<dbReference type="EMBL" id="BC102446">
    <property type="protein sequence ID" value="AAI02447.1"/>
    <property type="molecule type" value="mRNA"/>
</dbReference>
<dbReference type="RefSeq" id="NP_001029967.1">
    <property type="nucleotide sequence ID" value="NM_001034795.1"/>
</dbReference>
<dbReference type="SMR" id="Q5EA79"/>
<dbReference type="FunCoup" id="Q5EA79">
    <property type="interactions" value="1115"/>
</dbReference>
<dbReference type="STRING" id="9913.ENSBTAP00000028111"/>
<dbReference type="PaxDb" id="9913-ENSBTAP00000028111"/>
<dbReference type="PeptideAtlas" id="Q5EA79"/>
<dbReference type="Ensembl" id="ENSBTAT00000028111.5">
    <property type="protein sequence ID" value="ENSBTAP00000028111.3"/>
    <property type="gene ID" value="ENSBTAG00000021102.5"/>
</dbReference>
<dbReference type="GeneID" id="616676"/>
<dbReference type="KEGG" id="bta:616676"/>
<dbReference type="CTD" id="130589"/>
<dbReference type="VEuPathDB" id="HostDB:ENSBTAG00000021102"/>
<dbReference type="VGNC" id="VGNC:29221">
    <property type="gene designation" value="GALM"/>
</dbReference>
<dbReference type="eggNOG" id="KOG1604">
    <property type="taxonomic scope" value="Eukaryota"/>
</dbReference>
<dbReference type="GeneTree" id="ENSGT00510000047589"/>
<dbReference type="HOGENOM" id="CLU_031753_2_0_1"/>
<dbReference type="InParanoid" id="Q5EA79"/>
<dbReference type="OMA" id="IYHHISR"/>
<dbReference type="OrthoDB" id="274691at2759"/>
<dbReference type="TreeFam" id="TF324207"/>
<dbReference type="UniPathway" id="UPA00214"/>
<dbReference type="UniPathway" id="UPA00242"/>
<dbReference type="Proteomes" id="UP000009136">
    <property type="component" value="Chromosome 11"/>
</dbReference>
<dbReference type="Bgee" id="ENSBTAG00000021102">
    <property type="expression patterns" value="Expressed in cortex of kidney and 104 other cell types or tissues"/>
</dbReference>
<dbReference type="GO" id="GO:0005737">
    <property type="term" value="C:cytoplasm"/>
    <property type="evidence" value="ECO:0007669"/>
    <property type="project" value="UniProtKB-SubCell"/>
</dbReference>
<dbReference type="GO" id="GO:0004034">
    <property type="term" value="F:aldose 1-epimerase activity"/>
    <property type="evidence" value="ECO:0000318"/>
    <property type="project" value="GO_Central"/>
</dbReference>
<dbReference type="GO" id="GO:0030246">
    <property type="term" value="F:carbohydrate binding"/>
    <property type="evidence" value="ECO:0007669"/>
    <property type="project" value="InterPro"/>
</dbReference>
<dbReference type="GO" id="GO:0033499">
    <property type="term" value="P:galactose catabolic process via UDP-galactose, Leloir pathway"/>
    <property type="evidence" value="ECO:0000318"/>
    <property type="project" value="GO_Central"/>
</dbReference>
<dbReference type="GO" id="GO:0006006">
    <property type="term" value="P:glucose metabolic process"/>
    <property type="evidence" value="ECO:0000318"/>
    <property type="project" value="GO_Central"/>
</dbReference>
<dbReference type="CDD" id="cd09019">
    <property type="entry name" value="galactose_mutarotase_like"/>
    <property type="match status" value="1"/>
</dbReference>
<dbReference type="FunFam" id="2.70.98.10:FF:000003">
    <property type="entry name" value="Aldose 1-epimerase"/>
    <property type="match status" value="1"/>
</dbReference>
<dbReference type="Gene3D" id="2.70.98.10">
    <property type="match status" value="1"/>
</dbReference>
<dbReference type="InterPro" id="IPR018052">
    <property type="entry name" value="Ald1_epimerase_CS"/>
</dbReference>
<dbReference type="InterPro" id="IPR015443">
    <property type="entry name" value="Aldose_1-epimerase"/>
</dbReference>
<dbReference type="InterPro" id="IPR008183">
    <property type="entry name" value="Aldose_1/G6P_1-epimerase"/>
</dbReference>
<dbReference type="InterPro" id="IPR011013">
    <property type="entry name" value="Gal_mutarotase_sf_dom"/>
</dbReference>
<dbReference type="InterPro" id="IPR047215">
    <property type="entry name" value="Galactose_mutarotase-like"/>
</dbReference>
<dbReference type="InterPro" id="IPR014718">
    <property type="entry name" value="GH-type_carb-bd"/>
</dbReference>
<dbReference type="NCBIfam" id="NF008277">
    <property type="entry name" value="PRK11055.1"/>
    <property type="match status" value="1"/>
</dbReference>
<dbReference type="PANTHER" id="PTHR10091">
    <property type="entry name" value="ALDOSE-1-EPIMERASE"/>
    <property type="match status" value="1"/>
</dbReference>
<dbReference type="PANTHER" id="PTHR10091:SF0">
    <property type="entry name" value="GALACTOSE MUTAROTASE"/>
    <property type="match status" value="1"/>
</dbReference>
<dbReference type="Pfam" id="PF01263">
    <property type="entry name" value="Aldose_epim"/>
    <property type="match status" value="1"/>
</dbReference>
<dbReference type="PIRSF" id="PIRSF005096">
    <property type="entry name" value="GALM"/>
    <property type="match status" value="1"/>
</dbReference>
<dbReference type="SUPFAM" id="SSF74650">
    <property type="entry name" value="Galactose mutarotase-like"/>
    <property type="match status" value="1"/>
</dbReference>
<dbReference type="PROSITE" id="PS00545">
    <property type="entry name" value="ALDOSE_1_EPIMERASE"/>
    <property type="match status" value="1"/>
</dbReference>
<gene>
    <name type="primary">GALM</name>
</gene>
<feature type="initiator methionine" description="Removed" evidence="2">
    <location>
        <position position="1"/>
    </location>
</feature>
<feature type="chain" id="PRO_0000197432" description="Galactose mutarotase">
    <location>
        <begin position="2"/>
        <end position="342"/>
    </location>
</feature>
<feature type="active site" description="Proton donor" evidence="2">
    <location>
        <position position="176"/>
    </location>
</feature>
<feature type="active site" description="Proton acceptor" evidence="2">
    <location>
        <position position="307"/>
    </location>
</feature>
<feature type="binding site" evidence="2">
    <location>
        <begin position="81"/>
        <end position="82"/>
    </location>
    <ligand>
        <name>beta-D-galactose</name>
        <dbReference type="ChEBI" id="CHEBI:27667"/>
    </ligand>
</feature>
<feature type="binding site" evidence="2">
    <location>
        <position position="107"/>
    </location>
    <ligand>
        <name>beta-D-galactose</name>
        <dbReference type="ChEBI" id="CHEBI:27667"/>
    </ligand>
</feature>
<feature type="binding site" evidence="2">
    <location>
        <begin position="176"/>
        <end position="178"/>
    </location>
    <ligand>
        <name>beta-D-galactose</name>
        <dbReference type="ChEBI" id="CHEBI:27667"/>
    </ligand>
</feature>
<feature type="binding site" evidence="2">
    <location>
        <position position="243"/>
    </location>
    <ligand>
        <name>beta-D-galactose</name>
        <dbReference type="ChEBI" id="CHEBI:27667"/>
    </ligand>
</feature>
<feature type="binding site" evidence="2">
    <location>
        <position position="279"/>
    </location>
    <ligand>
        <name>beta-D-galactose</name>
        <dbReference type="ChEBI" id="CHEBI:27667"/>
    </ligand>
</feature>
<feature type="binding site" evidence="2">
    <location>
        <position position="307"/>
    </location>
    <ligand>
        <name>beta-D-galactose</name>
        <dbReference type="ChEBI" id="CHEBI:27667"/>
    </ligand>
</feature>
<feature type="modified residue" description="Phosphoserine" evidence="1">
    <location>
        <position position="124"/>
    </location>
</feature>
<protein>
    <recommendedName>
        <fullName>Galactose mutarotase</fullName>
        <ecNumber evidence="2">5.1.3.3</ecNumber>
    </recommendedName>
    <alternativeName>
        <fullName>Aldose 1-epimerase</fullName>
    </alternativeName>
</protein>
<name>GALM_BOVIN</name>
<sequence length="342" mass="37614">MVSVTRAVFGDLPLGAGTVEKFQLQSDQLRVDIISWGCTITALEVKDRQGRASDVVLGFDELEGYLQKQPYFGAVVGRVANRIAKGTFTLDGKEYKLAINNGPNSLHGGVKGFDKVLWTPRVLSNGVEFSRVSPDGEEGYPGELKVWVMYTLDGGELVVNYRAQASQTTPVNLTNHSYFNLAGQGSPNIYDHEVTIEADAFLPVDEVLIPTGEIASVQGTAFDLRKPVELGKHLQEFHVNGFDHNFCLKGSKEKRFCARVHHAGSGRVLEVYTTQPGVQFYTGNFLDGTLKGKSGAGYPKHSGFCLETQSWPDAVNQPHFPPVLLKPGEEYDHTTWFKFSVA</sequence>